<dbReference type="EC" id="2.7.7.6" evidence="1"/>
<dbReference type="EMBL" id="AY660566">
    <property type="protein sequence ID" value="AAT80693.1"/>
    <property type="molecule type" value="Genomic_DNA"/>
</dbReference>
<dbReference type="RefSeq" id="YP_209497.1">
    <property type="nucleotide sequence ID" value="NC_006861.1"/>
</dbReference>
<dbReference type="SMR" id="Q5SD25"/>
<dbReference type="GeneID" id="3283771"/>
<dbReference type="GO" id="GO:0009507">
    <property type="term" value="C:chloroplast"/>
    <property type="evidence" value="ECO:0007669"/>
    <property type="project" value="UniProtKB-SubCell"/>
</dbReference>
<dbReference type="GO" id="GO:0000428">
    <property type="term" value="C:DNA-directed RNA polymerase complex"/>
    <property type="evidence" value="ECO:0007669"/>
    <property type="project" value="UniProtKB-KW"/>
</dbReference>
<dbReference type="GO" id="GO:0005739">
    <property type="term" value="C:mitochondrion"/>
    <property type="evidence" value="ECO:0007669"/>
    <property type="project" value="GOC"/>
</dbReference>
<dbReference type="GO" id="GO:0003677">
    <property type="term" value="F:DNA binding"/>
    <property type="evidence" value="ECO:0007669"/>
    <property type="project" value="UniProtKB-UniRule"/>
</dbReference>
<dbReference type="GO" id="GO:0003899">
    <property type="term" value="F:DNA-directed RNA polymerase activity"/>
    <property type="evidence" value="ECO:0007669"/>
    <property type="project" value="UniProtKB-UniRule"/>
</dbReference>
<dbReference type="GO" id="GO:0046983">
    <property type="term" value="F:protein dimerization activity"/>
    <property type="evidence" value="ECO:0007669"/>
    <property type="project" value="InterPro"/>
</dbReference>
<dbReference type="GO" id="GO:0006351">
    <property type="term" value="P:DNA-templated transcription"/>
    <property type="evidence" value="ECO:0007669"/>
    <property type="project" value="UniProtKB-UniRule"/>
</dbReference>
<dbReference type="CDD" id="cd06928">
    <property type="entry name" value="RNAP_alpha_NTD"/>
    <property type="match status" value="1"/>
</dbReference>
<dbReference type="FunFam" id="2.170.120.12:FF:000001">
    <property type="entry name" value="DNA-directed RNA polymerase subunit alpha"/>
    <property type="match status" value="1"/>
</dbReference>
<dbReference type="Gene3D" id="1.10.150.20">
    <property type="entry name" value="5' to 3' exonuclease, C-terminal subdomain"/>
    <property type="match status" value="1"/>
</dbReference>
<dbReference type="Gene3D" id="2.170.120.12">
    <property type="entry name" value="DNA-directed RNA polymerase, insert domain"/>
    <property type="match status" value="1"/>
</dbReference>
<dbReference type="Gene3D" id="3.30.1360.10">
    <property type="entry name" value="RNA polymerase, RBP11-like subunit"/>
    <property type="match status" value="1"/>
</dbReference>
<dbReference type="HAMAP" id="MF_00059">
    <property type="entry name" value="RNApol_bact_RpoA"/>
    <property type="match status" value="1"/>
</dbReference>
<dbReference type="InterPro" id="IPR011262">
    <property type="entry name" value="DNA-dir_RNA_pol_insert"/>
</dbReference>
<dbReference type="InterPro" id="IPR011263">
    <property type="entry name" value="DNA-dir_RNA_pol_RpoA/D/Rpb3"/>
</dbReference>
<dbReference type="InterPro" id="IPR011773">
    <property type="entry name" value="DNA-dir_RpoA"/>
</dbReference>
<dbReference type="InterPro" id="IPR036603">
    <property type="entry name" value="RBP11-like"/>
</dbReference>
<dbReference type="InterPro" id="IPR011260">
    <property type="entry name" value="RNAP_asu_C"/>
</dbReference>
<dbReference type="InterPro" id="IPR036643">
    <property type="entry name" value="RNApol_insert_sf"/>
</dbReference>
<dbReference type="NCBIfam" id="TIGR02027">
    <property type="entry name" value="rpoA"/>
    <property type="match status" value="1"/>
</dbReference>
<dbReference type="Pfam" id="PF01000">
    <property type="entry name" value="RNA_pol_A_bac"/>
    <property type="match status" value="1"/>
</dbReference>
<dbReference type="Pfam" id="PF03118">
    <property type="entry name" value="RNA_pol_A_CTD"/>
    <property type="match status" value="1"/>
</dbReference>
<dbReference type="Pfam" id="PF01193">
    <property type="entry name" value="RNA_pol_L"/>
    <property type="match status" value="1"/>
</dbReference>
<dbReference type="SMART" id="SM00662">
    <property type="entry name" value="RPOLD"/>
    <property type="match status" value="1"/>
</dbReference>
<dbReference type="SUPFAM" id="SSF47789">
    <property type="entry name" value="C-terminal domain of RNA polymerase alpha subunit"/>
    <property type="match status" value="1"/>
</dbReference>
<dbReference type="SUPFAM" id="SSF56553">
    <property type="entry name" value="Insert subdomain of RNA polymerase alpha subunit"/>
    <property type="match status" value="1"/>
</dbReference>
<dbReference type="SUPFAM" id="SSF55257">
    <property type="entry name" value="RBP11-like subunits of RNA polymerase"/>
    <property type="match status" value="1"/>
</dbReference>
<proteinExistence type="inferred from homology"/>
<evidence type="ECO:0000255" key="1">
    <source>
        <dbReference type="HAMAP-Rule" id="MF_00059"/>
    </source>
</evidence>
<keyword id="KW-0150">Chloroplast</keyword>
<keyword id="KW-0240">DNA-directed RNA polymerase</keyword>
<keyword id="KW-0548">Nucleotidyltransferase</keyword>
<keyword id="KW-0934">Plastid</keyword>
<keyword id="KW-0804">Transcription</keyword>
<keyword id="KW-0808">Transferase</keyword>
<organism>
    <name type="scientific">Huperzia lucidula</name>
    <name type="common">Shining clubmoss</name>
    <name type="synonym">Lycopodium lucidulum</name>
    <dbReference type="NCBI Taxonomy" id="37429"/>
    <lineage>
        <taxon>Eukaryota</taxon>
        <taxon>Viridiplantae</taxon>
        <taxon>Streptophyta</taxon>
        <taxon>Embryophyta</taxon>
        <taxon>Tracheophyta</taxon>
        <taxon>Lycopodiopsida</taxon>
        <taxon>Lycopodiales</taxon>
        <taxon>Lycopodiaceae</taxon>
        <taxon>Huperzioideae</taxon>
        <taxon>Huperzia</taxon>
    </lineage>
</organism>
<name>RPOA_HUPLU</name>
<gene>
    <name evidence="1" type="primary">rpoA</name>
</gene>
<sequence length="336" mass="38373">MNDLDLNLVPPTAGSAYWRCVESKVESERLFYSRFILSPLKVGQANTIGLVMRRALLGEIKGTCITCAKFENITHEYSTMDGIQESVHDILINSKEIVLKSKSSEAQKAFISIVGPRRVTAQDIELPTSVEVIDPMQHIATITKKVKLNIELKIEKDSGYRRQNIVEYKDGNFTVDAVFTPIRSVNYSIHCFESHDKSIMKEMLLYEIWSNGSITPEEAIYEASRSSINLFLPFLQAEKEKEDFKGEDIHESNALHPSVSIVVDQMAKKVTFQHIFIEQLELSPKAYNFLKKINVHTISDLLDYSQDDLMKMKNFGKKSVEQILEALQKRFGMRLQ</sequence>
<accession>Q5SD25</accession>
<feature type="chain" id="PRO_0000175465" description="DNA-directed RNA polymerase subunit alpha">
    <location>
        <begin position="1"/>
        <end position="336"/>
    </location>
</feature>
<feature type="region of interest" description="Alpha N-terminal domain (alpha-NTD)" evidence="1">
    <location>
        <begin position="1"/>
        <end position="238"/>
    </location>
</feature>
<feature type="region of interest" description="Alpha C-terminal domain (alpha-CTD)" evidence="1">
    <location>
        <begin position="267"/>
        <end position="336"/>
    </location>
</feature>
<reference key="1">
    <citation type="journal article" date="2005" name="Gene">
        <title>The first complete chloroplast genome sequence of a lycophyte, Huperzia lucidula (Lycopodiaceae).</title>
        <authorList>
            <person name="Wolf P.G."/>
            <person name="Karol K.G."/>
            <person name="Mandoli D.F."/>
            <person name="Kuehl J.V."/>
            <person name="Arumuganathan K."/>
            <person name="Ellis M.W."/>
            <person name="Mishler B.D."/>
            <person name="Kelch D.G."/>
            <person name="Olmstead R.G."/>
            <person name="Boore J.L."/>
        </authorList>
    </citation>
    <scope>NUCLEOTIDE SEQUENCE [LARGE SCALE GENOMIC DNA]</scope>
</reference>
<geneLocation type="chloroplast"/>
<protein>
    <recommendedName>
        <fullName evidence="1">DNA-directed RNA polymerase subunit alpha</fullName>
        <shortName evidence="1">PEP</shortName>
        <ecNumber evidence="1">2.7.7.6</ecNumber>
    </recommendedName>
    <alternativeName>
        <fullName evidence="1">Plastid-encoded RNA polymerase subunit alpha</fullName>
        <shortName evidence="1">RNA polymerase subunit alpha</shortName>
    </alternativeName>
</protein>
<comment type="function">
    <text evidence="1">DNA-dependent RNA polymerase catalyzes the transcription of DNA into RNA using the four ribonucleoside triphosphates as substrates.</text>
</comment>
<comment type="catalytic activity">
    <reaction evidence="1">
        <text>RNA(n) + a ribonucleoside 5'-triphosphate = RNA(n+1) + diphosphate</text>
        <dbReference type="Rhea" id="RHEA:21248"/>
        <dbReference type="Rhea" id="RHEA-COMP:14527"/>
        <dbReference type="Rhea" id="RHEA-COMP:17342"/>
        <dbReference type="ChEBI" id="CHEBI:33019"/>
        <dbReference type="ChEBI" id="CHEBI:61557"/>
        <dbReference type="ChEBI" id="CHEBI:140395"/>
        <dbReference type="EC" id="2.7.7.6"/>
    </reaction>
</comment>
<comment type="subunit">
    <text evidence="1">In plastids the minimal PEP RNA polymerase catalytic core is composed of four subunits: alpha, beta, beta', and beta''. When a (nuclear-encoded) sigma factor is associated with the core the holoenzyme is formed, which can initiate transcription.</text>
</comment>
<comment type="subcellular location">
    <subcellularLocation>
        <location>Plastid</location>
        <location>Chloroplast</location>
    </subcellularLocation>
</comment>
<comment type="domain">
    <text evidence="1">The N-terminal domain is essential for RNAP assembly and basal transcription, whereas the C-terminal domain is involved in interaction with transcriptional regulators and with upstream promoter elements.</text>
</comment>
<comment type="similarity">
    <text evidence="1">Belongs to the RNA polymerase alpha chain family.</text>
</comment>